<protein>
    <recommendedName>
        <fullName evidence="5">ComP-specific O-oligosaccharyltransferase</fullName>
        <shortName evidence="5">ComP-specific O-OTase</shortName>
        <ecNumber evidence="7 8">2.4.-.-</ecNumber>
    </recommendedName>
</protein>
<proteinExistence type="inferred from homology"/>
<feature type="chain" id="PRO_0000433787" description="ComP-specific O-oligosaccharyltransferase">
    <location>
        <begin position="1"/>
        <end position="548"/>
    </location>
</feature>
<feature type="transmembrane region" description="Helical" evidence="1">
    <location>
        <begin position="8"/>
        <end position="28"/>
    </location>
</feature>
<feature type="transmembrane region" description="Helical" evidence="1">
    <location>
        <begin position="32"/>
        <end position="52"/>
    </location>
</feature>
<feature type="transmembrane region" description="Helical" evidence="1">
    <location>
        <begin position="68"/>
        <end position="88"/>
    </location>
</feature>
<feature type="transmembrane region" description="Helical" evidence="1">
    <location>
        <begin position="91"/>
        <end position="111"/>
    </location>
</feature>
<feature type="transmembrane region" description="Helical" evidence="1">
    <location>
        <begin position="119"/>
        <end position="139"/>
    </location>
</feature>
<feature type="transmembrane region" description="Helical" evidence="1">
    <location>
        <begin position="164"/>
        <end position="184"/>
    </location>
</feature>
<feature type="transmembrane region" description="Helical" evidence="1">
    <location>
        <begin position="189"/>
        <end position="209"/>
    </location>
</feature>
<feature type="transmembrane region" description="Helical" evidence="1">
    <location>
        <begin position="213"/>
        <end position="233"/>
    </location>
</feature>
<feature type="transmembrane region" description="Helical" evidence="1">
    <location>
        <begin position="239"/>
        <end position="259"/>
    </location>
</feature>
<feature type="transmembrane region" description="Helical" evidence="1">
    <location>
        <begin position="331"/>
        <end position="351"/>
    </location>
</feature>
<feature type="transmembrane region" description="Helical" evidence="1">
    <location>
        <begin position="363"/>
        <end position="383"/>
    </location>
</feature>
<feature type="transmembrane region" description="Helical" evidence="1">
    <location>
        <begin position="418"/>
        <end position="438"/>
    </location>
</feature>
<comment type="function">
    <text evidence="2">Specifically catalyzes the glycosylation of the pilin-like competence factor ComP.</text>
</comment>
<comment type="subcellular location">
    <subcellularLocation>
        <location evidence="1">Cell membrane</location>
        <topology evidence="1">Multi-pass membrane protein</topology>
    </subcellularLocation>
</comment>
<comment type="disruption phenotype">
    <text evidence="2 3">Loss of glycosylation of the ComP protein.</text>
</comment>
<comment type="similarity">
    <text evidence="6">Belongs to the PglL O-oligosaccharyltransferase family.</text>
</comment>
<gene>
    <name evidence="6" type="primary">pglL2</name>
    <name evidence="4" type="synonym">pglL</name>
    <name evidence="9" type="ordered locus">ACIAD3337</name>
</gene>
<name>PGLL2_ACIAD</name>
<sequence length="548" mass="64444">MNSIFKKIKNYTIVSGVFFLGSAFIIPNTSNLSSTLYKELIAVLGLLILLTVKSFDYKKILIPKNFYWFLFVIFIIFIQLIVGEIYFFQDFFFSISFLVILFLSFLLGFNERLNGDDLIVKKIAWIFIIVVQISFLIAINQKIEIVQNFFLFSSSYNGRSTANLGQPNQFSTLILITLFLLCYLREKNSLNNMVFNILSFCLIFANVMTQSRSAWISVILISLLYLLKFQKKIELRRVIFFNIVFWTLVYCVPLLFNLIFFQKNSYSTFDRLTMGSSRFEIWPQLLKAVFHKPFIGYGWGQTGVAQLETINKSSTKGEWFTYSHNLFLDLMLWNGFFIGLIISILILCFLIELYSSIKNKSDLFLFFCVVAFFVHCLLEYPFAYTYFLIPVGFLCGYISTQNIKNSISYFNLSKRKLTLFLGCCWLGYVAFWVEVLDISKKNEIYARQFLFSNHVKFYNIENYILDGFSKQLDFQYLDYCELKDKYQLLDFKKVAYRYPNASIVYKYYSISAEMKMDQKSANQIIRAYSVIKNQKIIKPKLKFCSIEY</sequence>
<keyword id="KW-1003">Cell membrane</keyword>
<keyword id="KW-0328">Glycosyltransferase</keyword>
<keyword id="KW-0472">Membrane</keyword>
<keyword id="KW-0808">Transferase</keyword>
<keyword id="KW-0812">Transmembrane</keyword>
<keyword id="KW-1133">Transmembrane helix</keyword>
<reference key="1">
    <citation type="journal article" date="2004" name="Nucleic Acids Res.">
        <title>Unique features revealed by the genome sequence of Acinetobacter sp. ADP1, a versatile and naturally transformation competent bacterium.</title>
        <authorList>
            <person name="Barbe V."/>
            <person name="Vallenet D."/>
            <person name="Fonknechten N."/>
            <person name="Kreimeyer A."/>
            <person name="Oztas S."/>
            <person name="Labarre L."/>
            <person name="Cruveiller S."/>
            <person name="Robert C."/>
            <person name="Duprat S."/>
            <person name="Wincker P."/>
            <person name="Ornston L.N."/>
            <person name="Weissenbach J."/>
            <person name="Marliere P."/>
            <person name="Cohen G.N."/>
            <person name="Medigue C."/>
        </authorList>
    </citation>
    <scope>NUCLEOTIDE SEQUENCE [LARGE SCALE GENOMIC DNA]</scope>
    <source>
        <strain>ATCC 33305 / BD413 / ADP1</strain>
    </source>
</reference>
<reference key="2">
    <citation type="journal article" date="2013" name="PLoS ONE">
        <title>Identification of bacterial protein O-oligosaccharyltransferases and their glycoprotein substrates.</title>
        <authorList>
            <person name="Schulz B.L."/>
            <person name="Jen F.E."/>
            <person name="Power P.M."/>
            <person name="Jones C.E."/>
            <person name="Fox K.L."/>
            <person name="Ku S.C."/>
            <person name="Blanchfield J.T."/>
            <person name="Jennings M.P."/>
        </authorList>
    </citation>
    <scope>FUNCTION</scope>
    <scope>DISRUPTION PHENOTYPE</scope>
    <source>
        <strain>ATCC 33305 / BD413 / ADP1</strain>
    </source>
</reference>
<reference key="3">
    <citation type="journal article" date="2015" name="Mol. Microbiol.">
        <title>Acinetobacter strains carry two functional oligosaccharyltransferases, one devoted exclusively to type IV pilin, and the other one dedicated to O-glycosylation of multiple proteins.</title>
        <authorList>
            <person name="Harding C.M."/>
            <person name="Nasr M.A."/>
            <person name="Kinsella R.L."/>
            <person name="Scott N.E."/>
            <person name="Foster L.J."/>
            <person name="Weber B.S."/>
            <person name="Fiester S.E."/>
            <person name="Actis L.A."/>
            <person name="Tracy E.N."/>
            <person name="Munson R.S. Jr."/>
            <person name="Feldman M.F."/>
        </authorList>
    </citation>
    <scope>FUNCTION</scope>
    <scope>DISRUPTION PHENOTYPE</scope>
    <source>
        <strain>ATCC 33305 / BD413 / ADP1</strain>
    </source>
</reference>
<dbReference type="EC" id="2.4.-.-" evidence="7 8"/>
<dbReference type="EMBL" id="CR543861">
    <property type="protein sequence ID" value="CAG70006.1"/>
    <property type="molecule type" value="Genomic_DNA"/>
</dbReference>
<dbReference type="RefSeq" id="WP_004923783.1">
    <property type="nucleotide sequence ID" value="NC_005966.1"/>
</dbReference>
<dbReference type="SMR" id="Q6F7F9"/>
<dbReference type="STRING" id="202950.GCA_001485005_02177"/>
<dbReference type="GeneID" id="45235534"/>
<dbReference type="KEGG" id="aci:ACIAD3337"/>
<dbReference type="eggNOG" id="COG3307">
    <property type="taxonomic scope" value="Bacteria"/>
</dbReference>
<dbReference type="HOGENOM" id="CLU_501210_0_0_6"/>
<dbReference type="OrthoDB" id="4448at2"/>
<dbReference type="BioCyc" id="ASP62977:ACIAD_RS15095-MONOMER"/>
<dbReference type="Proteomes" id="UP000000430">
    <property type="component" value="Chromosome"/>
</dbReference>
<dbReference type="GO" id="GO:0005886">
    <property type="term" value="C:plasma membrane"/>
    <property type="evidence" value="ECO:0007669"/>
    <property type="project" value="UniProtKB-SubCell"/>
</dbReference>
<dbReference type="GO" id="GO:0016757">
    <property type="term" value="F:glycosyltransferase activity"/>
    <property type="evidence" value="ECO:0000315"/>
    <property type="project" value="UniProtKB"/>
</dbReference>
<dbReference type="GO" id="GO:0006486">
    <property type="term" value="P:protein glycosylation"/>
    <property type="evidence" value="ECO:0000315"/>
    <property type="project" value="UniProtKB"/>
</dbReference>
<dbReference type="InterPro" id="IPR007016">
    <property type="entry name" value="O-antigen_ligase-rel_domated"/>
</dbReference>
<dbReference type="InterPro" id="IPR031726">
    <property type="entry name" value="PglL_A"/>
</dbReference>
<dbReference type="InterPro" id="IPR051533">
    <property type="entry name" value="WaaL-like"/>
</dbReference>
<dbReference type="InterPro" id="IPR021797">
    <property type="entry name" value="Wzy_C_2"/>
</dbReference>
<dbReference type="PANTHER" id="PTHR37422:SF13">
    <property type="entry name" value="LIPOPOLYSACCHARIDE BIOSYNTHESIS PROTEIN PA4999-RELATED"/>
    <property type="match status" value="1"/>
</dbReference>
<dbReference type="PANTHER" id="PTHR37422">
    <property type="entry name" value="TEICHURONIC ACID BIOSYNTHESIS PROTEIN TUAE"/>
    <property type="match status" value="1"/>
</dbReference>
<dbReference type="Pfam" id="PF15864">
    <property type="entry name" value="PglL_A"/>
    <property type="match status" value="1"/>
</dbReference>
<dbReference type="Pfam" id="PF04932">
    <property type="entry name" value="Wzy_C"/>
    <property type="match status" value="1"/>
</dbReference>
<dbReference type="Pfam" id="PF11846">
    <property type="entry name" value="Wzy_C_2"/>
    <property type="match status" value="1"/>
</dbReference>
<evidence type="ECO:0000255" key="1"/>
<evidence type="ECO:0000269" key="2">
    <source>
    </source>
</evidence>
<evidence type="ECO:0000269" key="3">
    <source>
    </source>
</evidence>
<evidence type="ECO:0000303" key="4">
    <source>
    </source>
</evidence>
<evidence type="ECO:0000303" key="5">
    <source>
    </source>
</evidence>
<evidence type="ECO:0000305" key="6"/>
<evidence type="ECO:0000305" key="7">
    <source>
    </source>
</evidence>
<evidence type="ECO:0000305" key="8">
    <source>
    </source>
</evidence>
<evidence type="ECO:0000312" key="9">
    <source>
        <dbReference type="EMBL" id="CAG70006.1"/>
    </source>
</evidence>
<accession>Q6F7F9</accession>
<organism>
    <name type="scientific">Acinetobacter baylyi (strain ATCC 33305 / BD413 / ADP1)</name>
    <dbReference type="NCBI Taxonomy" id="62977"/>
    <lineage>
        <taxon>Bacteria</taxon>
        <taxon>Pseudomonadati</taxon>
        <taxon>Pseudomonadota</taxon>
        <taxon>Gammaproteobacteria</taxon>
        <taxon>Moraxellales</taxon>
        <taxon>Moraxellaceae</taxon>
        <taxon>Acinetobacter</taxon>
    </lineage>
</organism>